<organism>
    <name type="scientific">Lactuca sativa</name>
    <name type="common">Garden lettuce</name>
    <dbReference type="NCBI Taxonomy" id="4236"/>
    <lineage>
        <taxon>Eukaryota</taxon>
        <taxon>Viridiplantae</taxon>
        <taxon>Streptophyta</taxon>
        <taxon>Embryophyta</taxon>
        <taxon>Tracheophyta</taxon>
        <taxon>Spermatophyta</taxon>
        <taxon>Magnoliopsida</taxon>
        <taxon>eudicotyledons</taxon>
        <taxon>Gunneridae</taxon>
        <taxon>Pentapetalae</taxon>
        <taxon>asterids</taxon>
        <taxon>campanulids</taxon>
        <taxon>Asterales</taxon>
        <taxon>Asteraceae</taxon>
        <taxon>Cichorioideae</taxon>
        <taxon>Cichorieae</taxon>
        <taxon>Lactucinae</taxon>
        <taxon>Lactuca</taxon>
    </lineage>
</organism>
<protein>
    <recommendedName>
        <fullName evidence="1">Cytochrome b6-f complex subunit 8</fullName>
    </recommendedName>
    <alternativeName>
        <fullName evidence="1">Cytochrome b6-f complex subunit PetN</fullName>
    </alternativeName>
    <alternativeName>
        <fullName evidence="1">Cytochrome b6-f complex subunit VIII</fullName>
    </alternativeName>
</protein>
<accession>Q56P15</accession>
<accession>Q1KXN7</accession>
<accession>Q332Z3</accession>
<proteinExistence type="inferred from homology"/>
<name>PETN_LACSA</name>
<comment type="function">
    <text evidence="1">Component of the cytochrome b6-f complex, which mediates electron transfer between photosystem II (PSII) and photosystem I (PSI), cyclic electron flow around PSI, and state transitions.</text>
</comment>
<comment type="subunit">
    <text evidence="1">The 4 large subunits of the cytochrome b6-f complex are cytochrome b6, subunit IV (17 kDa polypeptide, PetD), cytochrome f and the Rieske protein, while the 4 small subunits are PetG, PetL, PetM and PetN. The complex functions as a dimer.</text>
</comment>
<comment type="subcellular location">
    <subcellularLocation>
        <location evidence="1">Plastid</location>
        <location evidence="1">Chloroplast thylakoid membrane</location>
        <topology evidence="1">Single-pass membrane protein</topology>
    </subcellularLocation>
</comment>
<comment type="similarity">
    <text evidence="1">Belongs to the PetN family.</text>
</comment>
<geneLocation type="chloroplast"/>
<sequence>MDIVSLAWAALMVVFTFSLSLVVWGRSGL</sequence>
<feature type="chain" id="PRO_0000217111" description="Cytochrome b6-f complex subunit 8">
    <location>
        <begin position="1"/>
        <end position="29"/>
    </location>
</feature>
<feature type="transmembrane region" description="Helical" evidence="1">
    <location>
        <begin position="3"/>
        <end position="23"/>
    </location>
</feature>
<evidence type="ECO:0000255" key="1">
    <source>
        <dbReference type="HAMAP-Rule" id="MF_00395"/>
    </source>
</evidence>
<dbReference type="EMBL" id="AY865171">
    <property type="protein sequence ID" value="AAX58140.1"/>
    <property type="molecule type" value="Genomic_DNA"/>
</dbReference>
<dbReference type="EMBL" id="AP007232">
    <property type="protein sequence ID" value="BAE47579.1"/>
    <property type="molecule type" value="Genomic_DNA"/>
</dbReference>
<dbReference type="EMBL" id="DQ383816">
    <property type="protein sequence ID" value="ABD47218.1"/>
    <property type="molecule type" value="Genomic_DNA"/>
</dbReference>
<dbReference type="RefSeq" id="YP_398314.1">
    <property type="nucleotide sequence ID" value="NC_007578.1"/>
</dbReference>
<dbReference type="SMR" id="Q56P15"/>
<dbReference type="GeneID" id="3772841"/>
<dbReference type="KEGG" id="lsv:3772841"/>
<dbReference type="GO" id="GO:0009535">
    <property type="term" value="C:chloroplast thylakoid membrane"/>
    <property type="evidence" value="ECO:0007669"/>
    <property type="project" value="UniProtKB-SubCell"/>
</dbReference>
<dbReference type="GO" id="GO:0009512">
    <property type="term" value="C:cytochrome b6f complex"/>
    <property type="evidence" value="ECO:0007669"/>
    <property type="project" value="InterPro"/>
</dbReference>
<dbReference type="GO" id="GO:0045158">
    <property type="term" value="F:electron transporter, transferring electrons within cytochrome b6/f complex of photosystem II activity"/>
    <property type="evidence" value="ECO:0007669"/>
    <property type="project" value="InterPro"/>
</dbReference>
<dbReference type="GO" id="GO:0017004">
    <property type="term" value="P:cytochrome complex assembly"/>
    <property type="evidence" value="ECO:0007669"/>
    <property type="project" value="UniProtKB-UniRule"/>
</dbReference>
<dbReference type="GO" id="GO:0015979">
    <property type="term" value="P:photosynthesis"/>
    <property type="evidence" value="ECO:0007669"/>
    <property type="project" value="UniProtKB-KW"/>
</dbReference>
<dbReference type="HAMAP" id="MF_00395">
    <property type="entry name" value="Cytb6_f_PetN"/>
    <property type="match status" value="1"/>
</dbReference>
<dbReference type="InterPro" id="IPR036143">
    <property type="entry name" value="Cytochr_b6-f_cplx_su8_sf"/>
</dbReference>
<dbReference type="InterPro" id="IPR005497">
    <property type="entry name" value="Cytochrome_b6-f_cplx_su8"/>
</dbReference>
<dbReference type="Pfam" id="PF03742">
    <property type="entry name" value="PetN"/>
    <property type="match status" value="1"/>
</dbReference>
<dbReference type="SUPFAM" id="SSF103451">
    <property type="entry name" value="PetN subunit of the cytochrome b6f complex"/>
    <property type="match status" value="1"/>
</dbReference>
<gene>
    <name evidence="1" type="primary">petN</name>
    <name type="ORF">LSC007</name>
</gene>
<reference key="1">
    <citation type="journal article" date="2005" name="Mol. Biol. Evol.">
        <title>Two chloroplast DNA inversions originated simultaneously during the early evolution of the sunflower family (Asteraceae).</title>
        <authorList>
            <person name="Kim K.-J."/>
            <person name="Choi K.-S."/>
            <person name="Jansen R.K."/>
        </authorList>
    </citation>
    <scope>NUCLEOTIDE SEQUENCE [GENOMIC DNA]</scope>
</reference>
<reference key="2">
    <citation type="journal article" date="2006" name="Transgenic Res.">
        <title>Efficient and stable transformation of Lactuca sativa L. cv. Cisco (lettuce) plastids.</title>
        <authorList>
            <person name="Kanamoto H."/>
            <person name="Yamashita A."/>
            <person name="Asao H."/>
            <person name="Okumura S."/>
            <person name="Takase H."/>
            <person name="Hattori M."/>
            <person name="Yokota A."/>
            <person name="Tomizawa K."/>
        </authorList>
    </citation>
    <scope>NUCLEOTIDE SEQUENCE [LARGE SCALE GENOMIC DNA]</scope>
    <source>
        <strain>cv. Cisco</strain>
    </source>
</reference>
<reference key="3">
    <citation type="submission" date="2006-01" db="EMBL/GenBank/DDBJ databases">
        <title>A comparison of the first two published chloroplast genomes in Asteraceae: Lactuca and Helianthus.</title>
        <authorList>
            <person name="Timme R.E."/>
            <person name="Kuehl J.V."/>
            <person name="Boore J.L."/>
            <person name="Jansen R.K."/>
        </authorList>
    </citation>
    <scope>NUCLEOTIDE SEQUENCE [LARGE SCALE GENOMIC DNA]</scope>
    <source>
        <strain>cv. Salinas</strain>
    </source>
</reference>
<keyword id="KW-0150">Chloroplast</keyword>
<keyword id="KW-0249">Electron transport</keyword>
<keyword id="KW-0472">Membrane</keyword>
<keyword id="KW-0602">Photosynthesis</keyword>
<keyword id="KW-0934">Plastid</keyword>
<keyword id="KW-0793">Thylakoid</keyword>
<keyword id="KW-0812">Transmembrane</keyword>
<keyword id="KW-1133">Transmembrane helix</keyword>
<keyword id="KW-0813">Transport</keyword>